<sequence length="417" mass="45492">MEQIKDIFKQVRQAKGSLAFCKEEIINDTLYALADRVEAATDRILEENAKDLAAMDPSNPKYDRLKLTAERIHAIAQGIRQVATLPSPSGRILSEAVRPNGMKLTKVSVPFGVIGIIYEARPNVTLDVFALCFKSGNACILKGGSDADFSNRILVEIIRNTLLDVAHLSPYLVALLPAGHDSADALLHARGYVDLIIPRGGKGLIDYVRQNATIPVIETGAGVCHVYFDKEGDVAKGAAIIRNAKTRRVSVCNALDCLIIDVNRLTDLSTLCSGLQQDNVEIYADDLCYNYLKTSYPSHLLKHASTDTFGTEFLDYKMAVTATMTIQAAVAHISIYGSGHSECIVTENDRAADYFMKMVDAACVYVNVPTSFTDGGEFGLGAEIGISTQKLHARGPMGLEELNTYKWIIQGDGQIRQ</sequence>
<keyword id="KW-0028">Amino-acid biosynthesis</keyword>
<keyword id="KW-0963">Cytoplasm</keyword>
<keyword id="KW-0521">NADP</keyword>
<keyword id="KW-0560">Oxidoreductase</keyword>
<keyword id="KW-0641">Proline biosynthesis</keyword>
<dbReference type="EC" id="1.2.1.41" evidence="1"/>
<dbReference type="EMBL" id="CP000139">
    <property type="protein sequence ID" value="ABR38262.1"/>
    <property type="molecule type" value="Genomic_DNA"/>
</dbReference>
<dbReference type="RefSeq" id="WP_011964797.1">
    <property type="nucleotide sequence ID" value="NZ_CAXUAI010000003.1"/>
</dbReference>
<dbReference type="SMR" id="A6KXU8"/>
<dbReference type="STRING" id="435590.BVU_0552"/>
<dbReference type="PaxDb" id="435590-BVU_0552"/>
<dbReference type="GeneID" id="5301521"/>
<dbReference type="KEGG" id="bvu:BVU_0552"/>
<dbReference type="eggNOG" id="COG0014">
    <property type="taxonomic scope" value="Bacteria"/>
</dbReference>
<dbReference type="HOGENOM" id="CLU_030231_0_0_10"/>
<dbReference type="BioCyc" id="BVUL435590:G1G59-579-MONOMER"/>
<dbReference type="UniPathway" id="UPA00098">
    <property type="reaction ID" value="UER00360"/>
</dbReference>
<dbReference type="Proteomes" id="UP000002861">
    <property type="component" value="Chromosome"/>
</dbReference>
<dbReference type="GO" id="GO:0005737">
    <property type="term" value="C:cytoplasm"/>
    <property type="evidence" value="ECO:0007669"/>
    <property type="project" value="UniProtKB-SubCell"/>
</dbReference>
<dbReference type="GO" id="GO:0004350">
    <property type="term" value="F:glutamate-5-semialdehyde dehydrogenase activity"/>
    <property type="evidence" value="ECO:0007669"/>
    <property type="project" value="UniProtKB-UniRule"/>
</dbReference>
<dbReference type="GO" id="GO:0050661">
    <property type="term" value="F:NADP binding"/>
    <property type="evidence" value="ECO:0007669"/>
    <property type="project" value="InterPro"/>
</dbReference>
<dbReference type="GO" id="GO:0055129">
    <property type="term" value="P:L-proline biosynthetic process"/>
    <property type="evidence" value="ECO:0007669"/>
    <property type="project" value="UniProtKB-UniRule"/>
</dbReference>
<dbReference type="CDD" id="cd07079">
    <property type="entry name" value="ALDH_F18-19_ProA-GPR"/>
    <property type="match status" value="1"/>
</dbReference>
<dbReference type="Gene3D" id="3.40.605.10">
    <property type="entry name" value="Aldehyde Dehydrogenase, Chain A, domain 1"/>
    <property type="match status" value="1"/>
</dbReference>
<dbReference type="Gene3D" id="3.40.309.10">
    <property type="entry name" value="Aldehyde Dehydrogenase, Chain A, domain 2"/>
    <property type="match status" value="1"/>
</dbReference>
<dbReference type="HAMAP" id="MF_00412">
    <property type="entry name" value="ProA"/>
    <property type="match status" value="1"/>
</dbReference>
<dbReference type="InterPro" id="IPR016161">
    <property type="entry name" value="Ald_DH/histidinol_DH"/>
</dbReference>
<dbReference type="InterPro" id="IPR016163">
    <property type="entry name" value="Ald_DH_C"/>
</dbReference>
<dbReference type="InterPro" id="IPR016162">
    <property type="entry name" value="Ald_DH_N"/>
</dbReference>
<dbReference type="InterPro" id="IPR012134">
    <property type="entry name" value="Glu-5-SA_DH"/>
</dbReference>
<dbReference type="InterPro" id="IPR000965">
    <property type="entry name" value="GPR_dom"/>
</dbReference>
<dbReference type="NCBIfam" id="NF001221">
    <property type="entry name" value="PRK00197.1"/>
    <property type="match status" value="1"/>
</dbReference>
<dbReference type="NCBIfam" id="TIGR00407">
    <property type="entry name" value="proA"/>
    <property type="match status" value="1"/>
</dbReference>
<dbReference type="PANTHER" id="PTHR11063:SF8">
    <property type="entry name" value="DELTA-1-PYRROLINE-5-CARBOXYLATE SYNTHASE"/>
    <property type="match status" value="1"/>
</dbReference>
<dbReference type="PANTHER" id="PTHR11063">
    <property type="entry name" value="GLUTAMATE SEMIALDEHYDE DEHYDROGENASE"/>
    <property type="match status" value="1"/>
</dbReference>
<dbReference type="PIRSF" id="PIRSF000151">
    <property type="entry name" value="GPR"/>
    <property type="match status" value="1"/>
</dbReference>
<dbReference type="SUPFAM" id="SSF53720">
    <property type="entry name" value="ALDH-like"/>
    <property type="match status" value="1"/>
</dbReference>
<reference key="1">
    <citation type="journal article" date="2007" name="PLoS Biol.">
        <title>Evolution of symbiotic bacteria in the distal human intestine.</title>
        <authorList>
            <person name="Xu J."/>
            <person name="Mahowald M.A."/>
            <person name="Ley R.E."/>
            <person name="Lozupone C.A."/>
            <person name="Hamady M."/>
            <person name="Martens E.C."/>
            <person name="Henrissat B."/>
            <person name="Coutinho P.M."/>
            <person name="Minx P."/>
            <person name="Latreille P."/>
            <person name="Cordum H."/>
            <person name="Van Brunt A."/>
            <person name="Kim K."/>
            <person name="Fulton R.S."/>
            <person name="Fulton L.A."/>
            <person name="Clifton S.W."/>
            <person name="Wilson R.K."/>
            <person name="Knight R.D."/>
            <person name="Gordon J.I."/>
        </authorList>
    </citation>
    <scope>NUCLEOTIDE SEQUENCE [LARGE SCALE GENOMIC DNA]</scope>
    <source>
        <strain>ATCC 8482 / DSM 1447 / JCM 5826 / CCUG 4940 / NBRC 14291 / NCTC 11154</strain>
    </source>
</reference>
<name>PROA_PHOV8</name>
<gene>
    <name evidence="1" type="primary">proA</name>
    <name type="ordered locus">BVU_0552</name>
</gene>
<evidence type="ECO:0000255" key="1">
    <source>
        <dbReference type="HAMAP-Rule" id="MF_00412"/>
    </source>
</evidence>
<organism>
    <name type="scientific">Phocaeicola vulgatus (strain ATCC 8482 / DSM 1447 / JCM 5826 / CCUG 4940 / NBRC 14291 / NCTC 11154)</name>
    <name type="common">Bacteroides vulgatus</name>
    <dbReference type="NCBI Taxonomy" id="435590"/>
    <lineage>
        <taxon>Bacteria</taxon>
        <taxon>Pseudomonadati</taxon>
        <taxon>Bacteroidota</taxon>
        <taxon>Bacteroidia</taxon>
        <taxon>Bacteroidales</taxon>
        <taxon>Bacteroidaceae</taxon>
        <taxon>Phocaeicola</taxon>
    </lineage>
</organism>
<protein>
    <recommendedName>
        <fullName evidence="1">Gamma-glutamyl phosphate reductase</fullName>
        <shortName evidence="1">GPR</shortName>
        <ecNumber evidence="1">1.2.1.41</ecNumber>
    </recommendedName>
    <alternativeName>
        <fullName evidence="1">Glutamate-5-semialdehyde dehydrogenase</fullName>
    </alternativeName>
    <alternativeName>
        <fullName evidence="1">Glutamyl-gamma-semialdehyde dehydrogenase</fullName>
        <shortName evidence="1">GSA dehydrogenase</shortName>
    </alternativeName>
</protein>
<feature type="chain" id="PRO_1000193572" description="Gamma-glutamyl phosphate reductase">
    <location>
        <begin position="1"/>
        <end position="417"/>
    </location>
</feature>
<proteinExistence type="inferred from homology"/>
<comment type="function">
    <text evidence="1">Catalyzes the NADPH-dependent reduction of L-glutamate 5-phosphate into L-glutamate 5-semialdehyde and phosphate. The product spontaneously undergoes cyclization to form 1-pyrroline-5-carboxylate.</text>
</comment>
<comment type="catalytic activity">
    <reaction evidence="1">
        <text>L-glutamate 5-semialdehyde + phosphate + NADP(+) = L-glutamyl 5-phosphate + NADPH + H(+)</text>
        <dbReference type="Rhea" id="RHEA:19541"/>
        <dbReference type="ChEBI" id="CHEBI:15378"/>
        <dbReference type="ChEBI" id="CHEBI:43474"/>
        <dbReference type="ChEBI" id="CHEBI:57783"/>
        <dbReference type="ChEBI" id="CHEBI:58066"/>
        <dbReference type="ChEBI" id="CHEBI:58274"/>
        <dbReference type="ChEBI" id="CHEBI:58349"/>
        <dbReference type="EC" id="1.2.1.41"/>
    </reaction>
</comment>
<comment type="pathway">
    <text evidence="1">Amino-acid biosynthesis; L-proline biosynthesis; L-glutamate 5-semialdehyde from L-glutamate: step 2/2.</text>
</comment>
<comment type="subcellular location">
    <subcellularLocation>
        <location evidence="1">Cytoplasm</location>
    </subcellularLocation>
</comment>
<comment type="similarity">
    <text evidence="1">Belongs to the gamma-glutamyl phosphate reductase family.</text>
</comment>
<accession>A6KXU8</accession>